<protein>
    <recommendedName>
        <fullName>Protein translocase subunit SecF</fullName>
    </recommendedName>
</protein>
<evidence type="ECO:0000255" key="1">
    <source>
        <dbReference type="HAMAP-Rule" id="MF_01464"/>
    </source>
</evidence>
<sequence length="404" mass="43937">MELFRNTNIDFLGKKWYFLAFSLVFSVAGLISMGARYAKTGTAVPLGVDFKGGTLVYVKFAQTPNLGDIRAAMDRSGLKDPKIQTYGGPANNEVLIALEQKETSEQALDAGKNTIIKALETNPASGKNDLNNVGSTTIRDYLMSKDPLHEVVDPGAKYQQIASQIVDYRDKERGGVLSSVDELQGHVPADVVNALKTDYFTSGFGVRNVEIVGPQVGKQLSNQALLATLYSLGGMLVYLWFRFELIYGIGAVVACFHDTIITVGAFSLLNRDISLTVVAAILTLIGYSMNDTIVVYDRIRENIKLLRRESLADIVNKSINQTLSRTILTSGLTFLTVLSLYVFGGEVLRGFSLALVIGILIGTYSSIAVAAPMLVAYQEWRGHRGTAALPGPAPRKNDRVKVKA</sequence>
<organism>
    <name type="scientific">Koribacter versatilis (strain Ellin345)</name>
    <dbReference type="NCBI Taxonomy" id="204669"/>
    <lineage>
        <taxon>Bacteria</taxon>
        <taxon>Pseudomonadati</taxon>
        <taxon>Acidobacteriota</taxon>
        <taxon>Terriglobia</taxon>
        <taxon>Terriglobales</taxon>
        <taxon>Candidatus Korobacteraceae</taxon>
        <taxon>Candidatus Korobacter</taxon>
    </lineage>
</organism>
<name>SECF_KORVE</name>
<comment type="function">
    <text evidence="1">Part of the Sec protein translocase complex. Interacts with the SecYEG preprotein conducting channel. SecDF uses the proton motive force (PMF) to complete protein translocation after the ATP-dependent function of SecA.</text>
</comment>
<comment type="subunit">
    <text evidence="1">Forms a complex with SecD. Part of the essential Sec protein translocation apparatus which comprises SecA, SecYEG and auxiliary proteins SecDF. Other proteins may also be involved.</text>
</comment>
<comment type="subcellular location">
    <subcellularLocation>
        <location evidence="1">Cell inner membrane</location>
        <topology evidence="1">Multi-pass membrane protein</topology>
    </subcellularLocation>
</comment>
<comment type="similarity">
    <text evidence="1">Belongs to the SecD/SecF family. SecF subfamily.</text>
</comment>
<feature type="chain" id="PRO_5000120803" description="Protein translocase subunit SecF">
    <location>
        <begin position="1"/>
        <end position="404"/>
    </location>
</feature>
<feature type="transmembrane region" description="Helical" evidence="1">
    <location>
        <begin position="15"/>
        <end position="35"/>
    </location>
</feature>
<feature type="transmembrane region" description="Helical" evidence="1">
    <location>
        <begin position="225"/>
        <end position="245"/>
    </location>
</feature>
<feature type="transmembrane region" description="Helical" evidence="1">
    <location>
        <begin position="246"/>
        <end position="266"/>
    </location>
</feature>
<feature type="transmembrane region" description="Helical" evidence="1">
    <location>
        <begin position="275"/>
        <end position="295"/>
    </location>
</feature>
<feature type="transmembrane region" description="Helical" evidence="1">
    <location>
        <begin position="327"/>
        <end position="347"/>
    </location>
</feature>
<feature type="transmembrane region" description="Helical" evidence="1">
    <location>
        <begin position="355"/>
        <end position="375"/>
    </location>
</feature>
<keyword id="KW-0997">Cell inner membrane</keyword>
<keyword id="KW-1003">Cell membrane</keyword>
<keyword id="KW-0472">Membrane</keyword>
<keyword id="KW-0653">Protein transport</keyword>
<keyword id="KW-1185">Reference proteome</keyword>
<keyword id="KW-0811">Translocation</keyword>
<keyword id="KW-0812">Transmembrane</keyword>
<keyword id="KW-1133">Transmembrane helix</keyword>
<keyword id="KW-0813">Transport</keyword>
<accession>Q1IVE8</accession>
<dbReference type="EMBL" id="CP000360">
    <property type="protein sequence ID" value="ABF39152.1"/>
    <property type="molecule type" value="Genomic_DNA"/>
</dbReference>
<dbReference type="RefSeq" id="WP_011520954.1">
    <property type="nucleotide sequence ID" value="NC_008009.1"/>
</dbReference>
<dbReference type="SMR" id="Q1IVE8"/>
<dbReference type="STRING" id="204669.Acid345_0147"/>
<dbReference type="EnsemblBacteria" id="ABF39152">
    <property type="protein sequence ID" value="ABF39152"/>
    <property type="gene ID" value="Acid345_0147"/>
</dbReference>
<dbReference type="KEGG" id="aba:Acid345_0147"/>
<dbReference type="eggNOG" id="COG0341">
    <property type="taxonomic scope" value="Bacteria"/>
</dbReference>
<dbReference type="HOGENOM" id="CLU_050012_0_1_0"/>
<dbReference type="OrthoDB" id="9805019at2"/>
<dbReference type="Proteomes" id="UP000002432">
    <property type="component" value="Chromosome"/>
</dbReference>
<dbReference type="GO" id="GO:0005886">
    <property type="term" value="C:plasma membrane"/>
    <property type="evidence" value="ECO:0007669"/>
    <property type="project" value="UniProtKB-SubCell"/>
</dbReference>
<dbReference type="GO" id="GO:0015450">
    <property type="term" value="F:protein-transporting ATPase activity"/>
    <property type="evidence" value="ECO:0007669"/>
    <property type="project" value="InterPro"/>
</dbReference>
<dbReference type="GO" id="GO:0065002">
    <property type="term" value="P:intracellular protein transmembrane transport"/>
    <property type="evidence" value="ECO:0007669"/>
    <property type="project" value="UniProtKB-UniRule"/>
</dbReference>
<dbReference type="GO" id="GO:0006605">
    <property type="term" value="P:protein targeting"/>
    <property type="evidence" value="ECO:0007669"/>
    <property type="project" value="UniProtKB-UniRule"/>
</dbReference>
<dbReference type="GO" id="GO:0043952">
    <property type="term" value="P:protein transport by the Sec complex"/>
    <property type="evidence" value="ECO:0007669"/>
    <property type="project" value="UniProtKB-UniRule"/>
</dbReference>
<dbReference type="Gene3D" id="1.20.1640.10">
    <property type="entry name" value="Multidrug efflux transporter AcrB transmembrane domain"/>
    <property type="match status" value="1"/>
</dbReference>
<dbReference type="HAMAP" id="MF_01464_B">
    <property type="entry name" value="SecF_B"/>
    <property type="match status" value="1"/>
</dbReference>
<dbReference type="InterPro" id="IPR022813">
    <property type="entry name" value="SecD/SecF_arch_bac"/>
</dbReference>
<dbReference type="InterPro" id="IPR022645">
    <property type="entry name" value="SecD/SecF_bac"/>
</dbReference>
<dbReference type="InterPro" id="IPR022646">
    <property type="entry name" value="SecD/SecF_CS"/>
</dbReference>
<dbReference type="InterPro" id="IPR048634">
    <property type="entry name" value="SecD_SecF_C"/>
</dbReference>
<dbReference type="InterPro" id="IPR055344">
    <property type="entry name" value="SecD_SecF_C_bact"/>
</dbReference>
<dbReference type="InterPro" id="IPR005665">
    <property type="entry name" value="SecF_bac"/>
</dbReference>
<dbReference type="NCBIfam" id="TIGR00916">
    <property type="entry name" value="2A0604s01"/>
    <property type="match status" value="1"/>
</dbReference>
<dbReference type="NCBIfam" id="TIGR00966">
    <property type="entry name" value="transloc_SecF"/>
    <property type="match status" value="1"/>
</dbReference>
<dbReference type="PANTHER" id="PTHR30081:SF8">
    <property type="entry name" value="PROTEIN TRANSLOCASE SUBUNIT SECF"/>
    <property type="match status" value="1"/>
</dbReference>
<dbReference type="PANTHER" id="PTHR30081">
    <property type="entry name" value="PROTEIN-EXPORT MEMBRANE PROTEIN SEC"/>
    <property type="match status" value="1"/>
</dbReference>
<dbReference type="Pfam" id="PF07549">
    <property type="entry name" value="Sec_GG"/>
    <property type="match status" value="1"/>
</dbReference>
<dbReference type="Pfam" id="PF02355">
    <property type="entry name" value="SecD_SecF_C"/>
    <property type="match status" value="1"/>
</dbReference>
<dbReference type="PRINTS" id="PR01755">
    <property type="entry name" value="SECFTRNLCASE"/>
</dbReference>
<dbReference type="SUPFAM" id="SSF82866">
    <property type="entry name" value="Multidrug efflux transporter AcrB transmembrane domain"/>
    <property type="match status" value="1"/>
</dbReference>
<gene>
    <name evidence="1" type="primary">secF</name>
    <name type="ordered locus">Acid345_0147</name>
</gene>
<reference key="1">
    <citation type="journal article" date="2009" name="Appl. Environ. Microbiol.">
        <title>Three genomes from the phylum Acidobacteria provide insight into the lifestyles of these microorganisms in soils.</title>
        <authorList>
            <person name="Ward N.L."/>
            <person name="Challacombe J.F."/>
            <person name="Janssen P.H."/>
            <person name="Henrissat B."/>
            <person name="Coutinho P.M."/>
            <person name="Wu M."/>
            <person name="Xie G."/>
            <person name="Haft D.H."/>
            <person name="Sait M."/>
            <person name="Badger J."/>
            <person name="Barabote R.D."/>
            <person name="Bradley B."/>
            <person name="Brettin T.S."/>
            <person name="Brinkac L.M."/>
            <person name="Bruce D."/>
            <person name="Creasy T."/>
            <person name="Daugherty S.C."/>
            <person name="Davidsen T.M."/>
            <person name="DeBoy R.T."/>
            <person name="Detter J.C."/>
            <person name="Dodson R.J."/>
            <person name="Durkin A.S."/>
            <person name="Ganapathy A."/>
            <person name="Gwinn-Giglio M."/>
            <person name="Han C.S."/>
            <person name="Khouri H."/>
            <person name="Kiss H."/>
            <person name="Kothari S.P."/>
            <person name="Madupu R."/>
            <person name="Nelson K.E."/>
            <person name="Nelson W.C."/>
            <person name="Paulsen I."/>
            <person name="Penn K."/>
            <person name="Ren Q."/>
            <person name="Rosovitz M.J."/>
            <person name="Selengut J.D."/>
            <person name="Shrivastava S."/>
            <person name="Sullivan S.A."/>
            <person name="Tapia R."/>
            <person name="Thompson L.S."/>
            <person name="Watkins K.L."/>
            <person name="Yang Q."/>
            <person name="Yu C."/>
            <person name="Zafar N."/>
            <person name="Zhou L."/>
            <person name="Kuske C.R."/>
        </authorList>
    </citation>
    <scope>NUCLEOTIDE SEQUENCE [LARGE SCALE GENOMIC DNA]</scope>
    <source>
        <strain>Ellin345</strain>
    </source>
</reference>
<proteinExistence type="inferred from homology"/>